<reference key="1">
    <citation type="journal article" date="2007" name="PLoS ONE">
        <title>Analysis of the neurotoxin complex genes in Clostridium botulinum A1-A4 and B1 strains: BoNT/A3, /Ba4 and /B1 clusters are located within plasmids.</title>
        <authorList>
            <person name="Smith T.J."/>
            <person name="Hill K.K."/>
            <person name="Foley B.T."/>
            <person name="Detter J.C."/>
            <person name="Munk A.C."/>
            <person name="Bruce D.C."/>
            <person name="Doggett N.A."/>
            <person name="Smith L.A."/>
            <person name="Marks J.D."/>
            <person name="Xie G."/>
            <person name="Brettin T.S."/>
        </authorList>
    </citation>
    <scope>NUCLEOTIDE SEQUENCE [LARGE SCALE GENOMIC DNA]</scope>
    <source>
        <strain>Okra / Type B1</strain>
    </source>
</reference>
<sequence length="602" mass="67201">MQSERQKYIRNFSIVAHIDHGKSTLADRLIEATGTLTEREMDTQVLDNMDLEKERGITIKSQAVRLIYKRNTGEEYTLNLIDTPGHVDFNYEVSRSLAACEGAILVVDATQGIQAQTLANCYLALDNDLEIVPVINKIDLPSARPEEVKQEIEDVIGIEAEDAPLVSAKTGLNIKDALEAIVNKVPAPEGDEKAPLKALIFDSYYDSYKGVVCHIRVKEGTIKEGTEIKLMNTGKVYEVVEVGVFVPNYMPVDELKAGDVGYVTASIKNVRDARVGDTITEAKRSANEALSGYRPAVPMVFSGIYPVDGAKYEELKEALEKLQVNDAALSFEPETSIALGFGFRCGFLGLLHMDIIQERLEREFNLDIITTAPSVIYKITKTDGTLIELTNPTNMPSPSEIKLMEEPIVKSSIITPSDYVGAVMDLAQNRRGIFKDMQYLDTTRVSLNYEIPLNEIIYDFFDALKSRTRGYASFDYELIGYKDADLVKLDILLNADVVDALSMIVPRERAYAKGRNMAQKLKEIIPRQMFEIPIQAAVGAKIIARETIKAMRKDVLAKCYGGDISRKRKLLEKQKEGKKRMRQVGSVEVPQEAFMAVLKTEE</sequence>
<organism>
    <name type="scientific">Clostridium botulinum (strain Okra / Type B1)</name>
    <dbReference type="NCBI Taxonomy" id="498213"/>
    <lineage>
        <taxon>Bacteria</taxon>
        <taxon>Bacillati</taxon>
        <taxon>Bacillota</taxon>
        <taxon>Clostridia</taxon>
        <taxon>Eubacteriales</taxon>
        <taxon>Clostridiaceae</taxon>
        <taxon>Clostridium</taxon>
    </lineage>
</organism>
<accession>B1ILM7</accession>
<dbReference type="EC" id="3.6.5.n1" evidence="1"/>
<dbReference type="EMBL" id="CP000939">
    <property type="protein sequence ID" value="ACA45739.1"/>
    <property type="molecule type" value="Genomic_DNA"/>
</dbReference>
<dbReference type="RefSeq" id="WP_003400365.1">
    <property type="nucleotide sequence ID" value="NC_010516.1"/>
</dbReference>
<dbReference type="SMR" id="B1ILM7"/>
<dbReference type="KEGG" id="cbb:CLD_1582"/>
<dbReference type="HOGENOM" id="CLU_009995_3_3_9"/>
<dbReference type="Proteomes" id="UP000008541">
    <property type="component" value="Chromosome"/>
</dbReference>
<dbReference type="GO" id="GO:0005886">
    <property type="term" value="C:plasma membrane"/>
    <property type="evidence" value="ECO:0007669"/>
    <property type="project" value="UniProtKB-SubCell"/>
</dbReference>
<dbReference type="GO" id="GO:0005525">
    <property type="term" value="F:GTP binding"/>
    <property type="evidence" value="ECO:0007669"/>
    <property type="project" value="UniProtKB-UniRule"/>
</dbReference>
<dbReference type="GO" id="GO:0003924">
    <property type="term" value="F:GTPase activity"/>
    <property type="evidence" value="ECO:0007669"/>
    <property type="project" value="UniProtKB-UniRule"/>
</dbReference>
<dbReference type="GO" id="GO:0043022">
    <property type="term" value="F:ribosome binding"/>
    <property type="evidence" value="ECO:0007669"/>
    <property type="project" value="UniProtKB-UniRule"/>
</dbReference>
<dbReference type="GO" id="GO:0003746">
    <property type="term" value="F:translation elongation factor activity"/>
    <property type="evidence" value="ECO:0007669"/>
    <property type="project" value="UniProtKB-UniRule"/>
</dbReference>
<dbReference type="GO" id="GO:0045727">
    <property type="term" value="P:positive regulation of translation"/>
    <property type="evidence" value="ECO:0007669"/>
    <property type="project" value="UniProtKB-UniRule"/>
</dbReference>
<dbReference type="CDD" id="cd03699">
    <property type="entry name" value="EF4_II"/>
    <property type="match status" value="1"/>
</dbReference>
<dbReference type="CDD" id="cd16260">
    <property type="entry name" value="EF4_III"/>
    <property type="match status" value="1"/>
</dbReference>
<dbReference type="CDD" id="cd01890">
    <property type="entry name" value="LepA"/>
    <property type="match status" value="1"/>
</dbReference>
<dbReference type="CDD" id="cd03709">
    <property type="entry name" value="lepA_C"/>
    <property type="match status" value="1"/>
</dbReference>
<dbReference type="FunFam" id="3.40.50.300:FF:000078">
    <property type="entry name" value="Elongation factor 4"/>
    <property type="match status" value="1"/>
</dbReference>
<dbReference type="FunFam" id="2.40.30.10:FF:000015">
    <property type="entry name" value="Translation factor GUF1, mitochondrial"/>
    <property type="match status" value="1"/>
</dbReference>
<dbReference type="FunFam" id="3.30.70.240:FF:000007">
    <property type="entry name" value="Translation factor GUF1, mitochondrial"/>
    <property type="match status" value="1"/>
</dbReference>
<dbReference type="FunFam" id="3.30.70.2570:FF:000001">
    <property type="entry name" value="Translation factor GUF1, mitochondrial"/>
    <property type="match status" value="1"/>
</dbReference>
<dbReference type="FunFam" id="3.30.70.870:FF:000004">
    <property type="entry name" value="Translation factor GUF1, mitochondrial"/>
    <property type="match status" value="1"/>
</dbReference>
<dbReference type="Gene3D" id="3.30.70.240">
    <property type="match status" value="1"/>
</dbReference>
<dbReference type="Gene3D" id="3.30.70.2570">
    <property type="entry name" value="Elongation factor 4, C-terminal domain"/>
    <property type="match status" value="1"/>
</dbReference>
<dbReference type="Gene3D" id="3.30.70.870">
    <property type="entry name" value="Elongation Factor G (Translational Gtpase), domain 3"/>
    <property type="match status" value="1"/>
</dbReference>
<dbReference type="Gene3D" id="3.40.50.300">
    <property type="entry name" value="P-loop containing nucleotide triphosphate hydrolases"/>
    <property type="match status" value="1"/>
</dbReference>
<dbReference type="Gene3D" id="2.40.30.10">
    <property type="entry name" value="Translation factors"/>
    <property type="match status" value="1"/>
</dbReference>
<dbReference type="HAMAP" id="MF_00071">
    <property type="entry name" value="LepA"/>
    <property type="match status" value="1"/>
</dbReference>
<dbReference type="InterPro" id="IPR006297">
    <property type="entry name" value="EF-4"/>
</dbReference>
<dbReference type="InterPro" id="IPR035647">
    <property type="entry name" value="EFG_III/V"/>
</dbReference>
<dbReference type="InterPro" id="IPR000640">
    <property type="entry name" value="EFG_V-like"/>
</dbReference>
<dbReference type="InterPro" id="IPR004161">
    <property type="entry name" value="EFTu-like_2"/>
</dbReference>
<dbReference type="InterPro" id="IPR031157">
    <property type="entry name" value="G_TR_CS"/>
</dbReference>
<dbReference type="InterPro" id="IPR038363">
    <property type="entry name" value="LepA_C_sf"/>
</dbReference>
<dbReference type="InterPro" id="IPR013842">
    <property type="entry name" value="LepA_CTD"/>
</dbReference>
<dbReference type="InterPro" id="IPR035654">
    <property type="entry name" value="LepA_IV"/>
</dbReference>
<dbReference type="InterPro" id="IPR027417">
    <property type="entry name" value="P-loop_NTPase"/>
</dbReference>
<dbReference type="InterPro" id="IPR005225">
    <property type="entry name" value="Small_GTP-bd"/>
</dbReference>
<dbReference type="InterPro" id="IPR000795">
    <property type="entry name" value="T_Tr_GTP-bd_dom"/>
</dbReference>
<dbReference type="NCBIfam" id="TIGR01393">
    <property type="entry name" value="lepA"/>
    <property type="match status" value="1"/>
</dbReference>
<dbReference type="NCBIfam" id="TIGR00231">
    <property type="entry name" value="small_GTP"/>
    <property type="match status" value="1"/>
</dbReference>
<dbReference type="PANTHER" id="PTHR43512:SF4">
    <property type="entry name" value="TRANSLATION FACTOR GUF1 HOMOLOG, CHLOROPLASTIC"/>
    <property type="match status" value="1"/>
</dbReference>
<dbReference type="PANTHER" id="PTHR43512">
    <property type="entry name" value="TRANSLATION FACTOR GUF1-RELATED"/>
    <property type="match status" value="1"/>
</dbReference>
<dbReference type="Pfam" id="PF00679">
    <property type="entry name" value="EFG_C"/>
    <property type="match status" value="1"/>
</dbReference>
<dbReference type="Pfam" id="PF00009">
    <property type="entry name" value="GTP_EFTU"/>
    <property type="match status" value="1"/>
</dbReference>
<dbReference type="Pfam" id="PF03144">
    <property type="entry name" value="GTP_EFTU_D2"/>
    <property type="match status" value="1"/>
</dbReference>
<dbReference type="Pfam" id="PF06421">
    <property type="entry name" value="LepA_C"/>
    <property type="match status" value="1"/>
</dbReference>
<dbReference type="PRINTS" id="PR00315">
    <property type="entry name" value="ELONGATNFCT"/>
</dbReference>
<dbReference type="SMART" id="SM00838">
    <property type="entry name" value="EFG_C"/>
    <property type="match status" value="1"/>
</dbReference>
<dbReference type="SUPFAM" id="SSF54980">
    <property type="entry name" value="EF-G C-terminal domain-like"/>
    <property type="match status" value="2"/>
</dbReference>
<dbReference type="SUPFAM" id="SSF52540">
    <property type="entry name" value="P-loop containing nucleoside triphosphate hydrolases"/>
    <property type="match status" value="1"/>
</dbReference>
<dbReference type="PROSITE" id="PS00301">
    <property type="entry name" value="G_TR_1"/>
    <property type="match status" value="1"/>
</dbReference>
<dbReference type="PROSITE" id="PS51722">
    <property type="entry name" value="G_TR_2"/>
    <property type="match status" value="1"/>
</dbReference>
<evidence type="ECO:0000255" key="1">
    <source>
        <dbReference type="HAMAP-Rule" id="MF_00071"/>
    </source>
</evidence>
<name>LEPA_CLOBK</name>
<protein>
    <recommendedName>
        <fullName evidence="1">Elongation factor 4</fullName>
        <shortName evidence="1">EF-4</shortName>
        <ecNumber evidence="1">3.6.5.n1</ecNumber>
    </recommendedName>
    <alternativeName>
        <fullName evidence="1">Ribosomal back-translocase LepA</fullName>
    </alternativeName>
</protein>
<keyword id="KW-1003">Cell membrane</keyword>
<keyword id="KW-0342">GTP-binding</keyword>
<keyword id="KW-0378">Hydrolase</keyword>
<keyword id="KW-0472">Membrane</keyword>
<keyword id="KW-0547">Nucleotide-binding</keyword>
<keyword id="KW-0648">Protein biosynthesis</keyword>
<gene>
    <name evidence="1" type="primary">lepA</name>
    <name type="ordered locus">CLD_1582</name>
</gene>
<proteinExistence type="inferred from homology"/>
<comment type="function">
    <text evidence="1">Required for accurate and efficient protein synthesis under certain stress conditions. May act as a fidelity factor of the translation reaction, by catalyzing a one-codon backward translocation of tRNAs on improperly translocated ribosomes. Back-translocation proceeds from a post-translocation (POST) complex to a pre-translocation (PRE) complex, thus giving elongation factor G a second chance to translocate the tRNAs correctly. Binds to ribosomes in a GTP-dependent manner.</text>
</comment>
<comment type="catalytic activity">
    <reaction evidence="1">
        <text>GTP + H2O = GDP + phosphate + H(+)</text>
        <dbReference type="Rhea" id="RHEA:19669"/>
        <dbReference type="ChEBI" id="CHEBI:15377"/>
        <dbReference type="ChEBI" id="CHEBI:15378"/>
        <dbReference type="ChEBI" id="CHEBI:37565"/>
        <dbReference type="ChEBI" id="CHEBI:43474"/>
        <dbReference type="ChEBI" id="CHEBI:58189"/>
        <dbReference type="EC" id="3.6.5.n1"/>
    </reaction>
</comment>
<comment type="subcellular location">
    <subcellularLocation>
        <location evidence="1">Cell membrane</location>
        <topology evidence="1">Peripheral membrane protein</topology>
        <orientation evidence="1">Cytoplasmic side</orientation>
    </subcellularLocation>
</comment>
<comment type="similarity">
    <text evidence="1">Belongs to the TRAFAC class translation factor GTPase superfamily. Classic translation factor GTPase family. LepA subfamily.</text>
</comment>
<feature type="chain" id="PRO_1000092387" description="Elongation factor 4">
    <location>
        <begin position="1"/>
        <end position="602"/>
    </location>
</feature>
<feature type="domain" description="tr-type G">
    <location>
        <begin position="7"/>
        <end position="189"/>
    </location>
</feature>
<feature type="binding site" evidence="1">
    <location>
        <begin position="19"/>
        <end position="24"/>
    </location>
    <ligand>
        <name>GTP</name>
        <dbReference type="ChEBI" id="CHEBI:37565"/>
    </ligand>
</feature>
<feature type="binding site" evidence="1">
    <location>
        <begin position="136"/>
        <end position="139"/>
    </location>
    <ligand>
        <name>GTP</name>
        <dbReference type="ChEBI" id="CHEBI:37565"/>
    </ligand>
</feature>